<gene>
    <name evidence="1" type="primary">rpsC</name>
    <name type="ordered locus">Clos_0498</name>
</gene>
<dbReference type="EMBL" id="CP000853">
    <property type="protein sequence ID" value="ABW18060.1"/>
    <property type="molecule type" value="Genomic_DNA"/>
</dbReference>
<dbReference type="RefSeq" id="WP_012158374.1">
    <property type="nucleotide sequence ID" value="NC_009922.1"/>
</dbReference>
<dbReference type="SMR" id="A8MLE6"/>
<dbReference type="STRING" id="350688.Clos_0498"/>
<dbReference type="KEGG" id="aoe:Clos_0498"/>
<dbReference type="eggNOG" id="COG0092">
    <property type="taxonomic scope" value="Bacteria"/>
</dbReference>
<dbReference type="HOGENOM" id="CLU_058591_0_2_9"/>
<dbReference type="OrthoDB" id="9806396at2"/>
<dbReference type="Proteomes" id="UP000000269">
    <property type="component" value="Chromosome"/>
</dbReference>
<dbReference type="GO" id="GO:0022627">
    <property type="term" value="C:cytosolic small ribosomal subunit"/>
    <property type="evidence" value="ECO:0007669"/>
    <property type="project" value="TreeGrafter"/>
</dbReference>
<dbReference type="GO" id="GO:0003729">
    <property type="term" value="F:mRNA binding"/>
    <property type="evidence" value="ECO:0007669"/>
    <property type="project" value="UniProtKB-UniRule"/>
</dbReference>
<dbReference type="GO" id="GO:0019843">
    <property type="term" value="F:rRNA binding"/>
    <property type="evidence" value="ECO:0007669"/>
    <property type="project" value="UniProtKB-UniRule"/>
</dbReference>
<dbReference type="GO" id="GO:0003735">
    <property type="term" value="F:structural constituent of ribosome"/>
    <property type="evidence" value="ECO:0007669"/>
    <property type="project" value="InterPro"/>
</dbReference>
<dbReference type="GO" id="GO:0006412">
    <property type="term" value="P:translation"/>
    <property type="evidence" value="ECO:0007669"/>
    <property type="project" value="UniProtKB-UniRule"/>
</dbReference>
<dbReference type="CDD" id="cd02412">
    <property type="entry name" value="KH-II_30S_S3"/>
    <property type="match status" value="1"/>
</dbReference>
<dbReference type="FunFam" id="3.30.1140.32:FF:000002">
    <property type="entry name" value="30S ribosomal protein S3"/>
    <property type="match status" value="1"/>
</dbReference>
<dbReference type="FunFam" id="3.30.300.20:FF:000001">
    <property type="entry name" value="30S ribosomal protein S3"/>
    <property type="match status" value="1"/>
</dbReference>
<dbReference type="Gene3D" id="3.30.300.20">
    <property type="match status" value="1"/>
</dbReference>
<dbReference type="Gene3D" id="3.30.1140.32">
    <property type="entry name" value="Ribosomal protein S3, C-terminal domain"/>
    <property type="match status" value="1"/>
</dbReference>
<dbReference type="HAMAP" id="MF_01309_B">
    <property type="entry name" value="Ribosomal_uS3_B"/>
    <property type="match status" value="1"/>
</dbReference>
<dbReference type="InterPro" id="IPR004087">
    <property type="entry name" value="KH_dom"/>
</dbReference>
<dbReference type="InterPro" id="IPR015946">
    <property type="entry name" value="KH_dom-like_a/b"/>
</dbReference>
<dbReference type="InterPro" id="IPR004044">
    <property type="entry name" value="KH_dom_type_2"/>
</dbReference>
<dbReference type="InterPro" id="IPR009019">
    <property type="entry name" value="KH_sf_prok-type"/>
</dbReference>
<dbReference type="InterPro" id="IPR036419">
    <property type="entry name" value="Ribosomal_S3_C_sf"/>
</dbReference>
<dbReference type="InterPro" id="IPR005704">
    <property type="entry name" value="Ribosomal_uS3_bac-typ"/>
</dbReference>
<dbReference type="InterPro" id="IPR001351">
    <property type="entry name" value="Ribosomal_uS3_C"/>
</dbReference>
<dbReference type="InterPro" id="IPR018280">
    <property type="entry name" value="Ribosomal_uS3_CS"/>
</dbReference>
<dbReference type="NCBIfam" id="TIGR01009">
    <property type="entry name" value="rpsC_bact"/>
    <property type="match status" value="1"/>
</dbReference>
<dbReference type="PANTHER" id="PTHR11760">
    <property type="entry name" value="30S/40S RIBOSOMAL PROTEIN S3"/>
    <property type="match status" value="1"/>
</dbReference>
<dbReference type="PANTHER" id="PTHR11760:SF19">
    <property type="entry name" value="SMALL RIBOSOMAL SUBUNIT PROTEIN US3C"/>
    <property type="match status" value="1"/>
</dbReference>
<dbReference type="Pfam" id="PF07650">
    <property type="entry name" value="KH_2"/>
    <property type="match status" value="1"/>
</dbReference>
<dbReference type="Pfam" id="PF00189">
    <property type="entry name" value="Ribosomal_S3_C"/>
    <property type="match status" value="1"/>
</dbReference>
<dbReference type="SMART" id="SM00322">
    <property type="entry name" value="KH"/>
    <property type="match status" value="1"/>
</dbReference>
<dbReference type="SUPFAM" id="SSF54814">
    <property type="entry name" value="Prokaryotic type KH domain (KH-domain type II)"/>
    <property type="match status" value="1"/>
</dbReference>
<dbReference type="SUPFAM" id="SSF54821">
    <property type="entry name" value="Ribosomal protein S3 C-terminal domain"/>
    <property type="match status" value="1"/>
</dbReference>
<dbReference type="PROSITE" id="PS50823">
    <property type="entry name" value="KH_TYPE_2"/>
    <property type="match status" value="1"/>
</dbReference>
<dbReference type="PROSITE" id="PS00548">
    <property type="entry name" value="RIBOSOMAL_S3"/>
    <property type="match status" value="1"/>
</dbReference>
<sequence length="238" mass="26510">MGQKVNPHGLRVGIIKDWDTKWYANKRDFGDLLVEDNEIRKFVKKKLFLSGVSRIEIERAANNKVKVNVHTAKPGMVIGKGGQGVEDLRKDIEKISKKNVAVNVIEVKRPETDAQLVAENVAFQLERRVSFRRAMKQVMQRAMKSGAKGIKVATSGRLGGAEMARTEGYSQGNVPLQTLRADINYGFAEADTTYGKLGIKVWIYKGEVLPTKGRVASNNEEVVGNVEKNTRGKKREAK</sequence>
<reference key="1">
    <citation type="submission" date="2007-10" db="EMBL/GenBank/DDBJ databases">
        <title>Complete genome of Alkaliphilus oremlandii OhILAs.</title>
        <authorList>
            <person name="Copeland A."/>
            <person name="Lucas S."/>
            <person name="Lapidus A."/>
            <person name="Barry K."/>
            <person name="Detter J.C."/>
            <person name="Glavina del Rio T."/>
            <person name="Hammon N."/>
            <person name="Israni S."/>
            <person name="Dalin E."/>
            <person name="Tice H."/>
            <person name="Pitluck S."/>
            <person name="Chain P."/>
            <person name="Malfatti S."/>
            <person name="Shin M."/>
            <person name="Vergez L."/>
            <person name="Schmutz J."/>
            <person name="Larimer F."/>
            <person name="Land M."/>
            <person name="Hauser L."/>
            <person name="Kyrpides N."/>
            <person name="Mikhailova N."/>
            <person name="Stolz J.F."/>
            <person name="Dawson A."/>
            <person name="Fisher E."/>
            <person name="Crable B."/>
            <person name="Perera E."/>
            <person name="Lisak J."/>
            <person name="Ranganathan M."/>
            <person name="Basu P."/>
            <person name="Richardson P."/>
        </authorList>
    </citation>
    <scope>NUCLEOTIDE SEQUENCE [LARGE SCALE GENOMIC DNA]</scope>
    <source>
        <strain>OhILAs</strain>
    </source>
</reference>
<proteinExistence type="inferred from homology"/>
<feature type="chain" id="PRO_1000086085" description="Small ribosomal subunit protein uS3">
    <location>
        <begin position="1"/>
        <end position="238"/>
    </location>
</feature>
<feature type="domain" description="KH type-2" evidence="1">
    <location>
        <begin position="39"/>
        <end position="108"/>
    </location>
</feature>
<comment type="function">
    <text evidence="1">Binds the lower part of the 30S subunit head. Binds mRNA in the 70S ribosome, positioning it for translation.</text>
</comment>
<comment type="subunit">
    <text evidence="1">Part of the 30S ribosomal subunit. Forms a tight complex with proteins S10 and S14.</text>
</comment>
<comment type="similarity">
    <text evidence="1">Belongs to the universal ribosomal protein uS3 family.</text>
</comment>
<organism>
    <name type="scientific">Alkaliphilus oremlandii (strain OhILAs)</name>
    <name type="common">Clostridium oremlandii (strain OhILAs)</name>
    <dbReference type="NCBI Taxonomy" id="350688"/>
    <lineage>
        <taxon>Bacteria</taxon>
        <taxon>Bacillati</taxon>
        <taxon>Bacillota</taxon>
        <taxon>Clostridia</taxon>
        <taxon>Peptostreptococcales</taxon>
        <taxon>Natronincolaceae</taxon>
        <taxon>Alkaliphilus</taxon>
    </lineage>
</organism>
<name>RS3_ALKOO</name>
<evidence type="ECO:0000255" key="1">
    <source>
        <dbReference type="HAMAP-Rule" id="MF_01309"/>
    </source>
</evidence>
<evidence type="ECO:0000305" key="2"/>
<protein>
    <recommendedName>
        <fullName evidence="1">Small ribosomal subunit protein uS3</fullName>
    </recommendedName>
    <alternativeName>
        <fullName evidence="2">30S ribosomal protein S3</fullName>
    </alternativeName>
</protein>
<accession>A8MLE6</accession>
<keyword id="KW-1185">Reference proteome</keyword>
<keyword id="KW-0687">Ribonucleoprotein</keyword>
<keyword id="KW-0689">Ribosomal protein</keyword>
<keyword id="KW-0694">RNA-binding</keyword>
<keyword id="KW-0699">rRNA-binding</keyword>